<reference key="1">
    <citation type="journal article" date="2001" name="Proc. R. Soc. B">
        <title>Mitochondrial genomes of a bandicoot and a brushtail possum confirm the monophyly of australidelphian marsupials.</title>
        <authorList>
            <person name="Phillips M.J."/>
            <person name="Lin Y.-H."/>
            <person name="Harrison G.L."/>
            <person name="Penny D."/>
        </authorList>
    </citation>
    <scope>NUCLEOTIDE SEQUENCE [GENOMIC DNA]</scope>
</reference>
<organism>
    <name type="scientific">Trichosurus vulpecula</name>
    <name type="common">Brush-tailed possum</name>
    <dbReference type="NCBI Taxonomy" id="9337"/>
    <lineage>
        <taxon>Eukaryota</taxon>
        <taxon>Metazoa</taxon>
        <taxon>Chordata</taxon>
        <taxon>Craniata</taxon>
        <taxon>Vertebrata</taxon>
        <taxon>Euteleostomi</taxon>
        <taxon>Mammalia</taxon>
        <taxon>Metatheria</taxon>
        <taxon>Diprotodontia</taxon>
        <taxon>Phalangeridae</taxon>
        <taxon>Trichosurus</taxon>
    </lineage>
</organism>
<proteinExistence type="inferred from homology"/>
<accession>Q952R8</accession>
<evidence type="ECO:0000250" key="1">
    <source>
        <dbReference type="UniProtKB" id="P03901"/>
    </source>
</evidence>
<evidence type="ECO:0000250" key="2">
    <source>
        <dbReference type="UniProtKB" id="P03902"/>
    </source>
</evidence>
<evidence type="ECO:0000255" key="3"/>
<evidence type="ECO:0000305" key="4"/>
<gene>
    <name type="primary">MT-ND4L</name>
    <name type="synonym">MTND4L</name>
    <name type="synonym">NADH4L</name>
    <name type="synonym">ND4L</name>
</gene>
<comment type="function">
    <text evidence="1">Core subunit of the mitochondrial membrane respiratory chain NADH dehydrogenase (Complex I) which catalyzes electron transfer from NADH through the respiratory chain, using ubiquinone as an electron acceptor. Part of the enzyme membrane arm which is embedded in the lipid bilayer and involved in proton translocation.</text>
</comment>
<comment type="catalytic activity">
    <reaction evidence="1">
        <text>a ubiquinone + NADH + 5 H(+)(in) = a ubiquinol + NAD(+) + 4 H(+)(out)</text>
        <dbReference type="Rhea" id="RHEA:29091"/>
        <dbReference type="Rhea" id="RHEA-COMP:9565"/>
        <dbReference type="Rhea" id="RHEA-COMP:9566"/>
        <dbReference type="ChEBI" id="CHEBI:15378"/>
        <dbReference type="ChEBI" id="CHEBI:16389"/>
        <dbReference type="ChEBI" id="CHEBI:17976"/>
        <dbReference type="ChEBI" id="CHEBI:57540"/>
        <dbReference type="ChEBI" id="CHEBI:57945"/>
        <dbReference type="EC" id="7.1.1.2"/>
    </reaction>
    <physiologicalReaction direction="left-to-right" evidence="1">
        <dbReference type="Rhea" id="RHEA:29092"/>
    </physiologicalReaction>
</comment>
<comment type="subunit">
    <text evidence="2">Core subunit of respiratory chain NADH dehydrogenase (Complex I) which is composed of 45 different subunits.</text>
</comment>
<comment type="subcellular location">
    <subcellularLocation>
        <location evidence="2">Mitochondrion inner membrane</location>
        <topology evidence="3">Multi-pass membrane protein</topology>
    </subcellularLocation>
</comment>
<comment type="similarity">
    <text evidence="4">Belongs to the complex I subunit 4L family.</text>
</comment>
<feature type="chain" id="PRO_0000275134" description="NADH-ubiquinone oxidoreductase chain 4L">
    <location>
        <begin position="1"/>
        <end position="98"/>
    </location>
</feature>
<feature type="transmembrane region" description="Helical" evidence="3">
    <location>
        <begin position="1"/>
        <end position="21"/>
    </location>
</feature>
<feature type="transmembrane region" description="Helical" evidence="3">
    <location>
        <begin position="28"/>
        <end position="48"/>
    </location>
</feature>
<feature type="transmembrane region" description="Helical" evidence="3">
    <location>
        <begin position="59"/>
        <end position="79"/>
    </location>
</feature>
<protein>
    <recommendedName>
        <fullName>NADH-ubiquinone oxidoreductase chain 4L</fullName>
        <ecNumber>7.1.1.2</ecNumber>
    </recommendedName>
    <alternativeName>
        <fullName>NADH dehydrogenase subunit 4L</fullName>
    </alternativeName>
</protein>
<sequence>MTSINLNLTVAFSLALAGVLIYRSHLMSTLLCLEGMMLSLFVMMALLISHFHMFSTSMAPIILLVFSACEAGVGLALLVKTSNNYGNDYVQNLNLLQC</sequence>
<geneLocation type="mitochondrion"/>
<dbReference type="EC" id="7.1.1.2"/>
<dbReference type="EMBL" id="AF357238">
    <property type="protein sequence ID" value="AAK38701.1"/>
    <property type="molecule type" value="Genomic_DNA"/>
</dbReference>
<dbReference type="RefSeq" id="NP_149939.1">
    <property type="nucleotide sequence ID" value="NC_003039.1"/>
</dbReference>
<dbReference type="SMR" id="Q952R8"/>
<dbReference type="GeneID" id="803528"/>
<dbReference type="KEGG" id="tvp:803528"/>
<dbReference type="CTD" id="4539"/>
<dbReference type="OrthoDB" id="6146597at2759"/>
<dbReference type="GO" id="GO:0005743">
    <property type="term" value="C:mitochondrial inner membrane"/>
    <property type="evidence" value="ECO:0000250"/>
    <property type="project" value="UniProtKB"/>
</dbReference>
<dbReference type="GO" id="GO:0045271">
    <property type="term" value="C:respiratory chain complex I"/>
    <property type="evidence" value="ECO:0000250"/>
    <property type="project" value="UniProtKB"/>
</dbReference>
<dbReference type="GO" id="GO:0008137">
    <property type="term" value="F:NADH dehydrogenase (ubiquinone) activity"/>
    <property type="evidence" value="ECO:0000250"/>
    <property type="project" value="UniProtKB"/>
</dbReference>
<dbReference type="GO" id="GO:0042773">
    <property type="term" value="P:ATP synthesis coupled electron transport"/>
    <property type="evidence" value="ECO:0007669"/>
    <property type="project" value="InterPro"/>
</dbReference>
<dbReference type="FunFam" id="1.10.287.3510:FF:000002">
    <property type="entry name" value="NADH-ubiquinone oxidoreductase chain 4L"/>
    <property type="match status" value="1"/>
</dbReference>
<dbReference type="Gene3D" id="1.10.287.3510">
    <property type="match status" value="1"/>
</dbReference>
<dbReference type="InterPro" id="IPR001133">
    <property type="entry name" value="NADH_UbQ_OxRdtase_chain4L/K"/>
</dbReference>
<dbReference type="InterPro" id="IPR039428">
    <property type="entry name" value="NUOK/Mnh_C1-like"/>
</dbReference>
<dbReference type="PANTHER" id="PTHR11434:SF0">
    <property type="entry name" value="NADH-UBIQUINONE OXIDOREDUCTASE CHAIN 4L"/>
    <property type="match status" value="1"/>
</dbReference>
<dbReference type="PANTHER" id="PTHR11434">
    <property type="entry name" value="NADH-UBIQUINONE OXIDOREDUCTASE SUBUNIT ND4L"/>
    <property type="match status" value="1"/>
</dbReference>
<dbReference type="Pfam" id="PF00420">
    <property type="entry name" value="Oxidored_q2"/>
    <property type="match status" value="1"/>
</dbReference>
<keyword id="KW-0249">Electron transport</keyword>
<keyword id="KW-0472">Membrane</keyword>
<keyword id="KW-0496">Mitochondrion</keyword>
<keyword id="KW-0999">Mitochondrion inner membrane</keyword>
<keyword id="KW-0520">NAD</keyword>
<keyword id="KW-0679">Respiratory chain</keyword>
<keyword id="KW-1278">Translocase</keyword>
<keyword id="KW-0812">Transmembrane</keyword>
<keyword id="KW-1133">Transmembrane helix</keyword>
<keyword id="KW-0813">Transport</keyword>
<keyword id="KW-0830">Ubiquinone</keyword>
<name>NU4LM_TRIVU</name>